<organism>
    <name type="scientific">Burkholderia multivorans (strain ATCC 17616 / 249)</name>
    <dbReference type="NCBI Taxonomy" id="395019"/>
    <lineage>
        <taxon>Bacteria</taxon>
        <taxon>Pseudomonadati</taxon>
        <taxon>Pseudomonadota</taxon>
        <taxon>Betaproteobacteria</taxon>
        <taxon>Burkholderiales</taxon>
        <taxon>Burkholderiaceae</taxon>
        <taxon>Burkholderia</taxon>
        <taxon>Burkholderia cepacia complex</taxon>
    </lineage>
</organism>
<proteinExistence type="inferred from homology"/>
<evidence type="ECO:0000255" key="1">
    <source>
        <dbReference type="HAMAP-Rule" id="MF_00692"/>
    </source>
</evidence>
<reference key="1">
    <citation type="submission" date="2007-10" db="EMBL/GenBank/DDBJ databases">
        <title>Complete sequence of chromosome 1 of Burkholderia multivorans ATCC 17616.</title>
        <authorList>
            <person name="Copeland A."/>
            <person name="Lucas S."/>
            <person name="Lapidus A."/>
            <person name="Barry K."/>
            <person name="Glavina del Rio T."/>
            <person name="Dalin E."/>
            <person name="Tice H."/>
            <person name="Pitluck S."/>
            <person name="Chain P."/>
            <person name="Malfatti S."/>
            <person name="Shin M."/>
            <person name="Vergez L."/>
            <person name="Schmutz J."/>
            <person name="Larimer F."/>
            <person name="Land M."/>
            <person name="Hauser L."/>
            <person name="Kyrpides N."/>
            <person name="Kim E."/>
            <person name="Tiedje J."/>
            <person name="Richardson P."/>
        </authorList>
    </citation>
    <scope>NUCLEOTIDE SEQUENCE [LARGE SCALE GENOMIC DNA]</scope>
    <source>
        <strain>ATCC 17616 / 249</strain>
    </source>
</reference>
<reference key="2">
    <citation type="submission" date="2007-04" db="EMBL/GenBank/DDBJ databases">
        <title>Complete genome sequence of Burkholderia multivorans ATCC 17616.</title>
        <authorList>
            <person name="Ohtsubo Y."/>
            <person name="Yamashita A."/>
            <person name="Kurokawa K."/>
            <person name="Takami H."/>
            <person name="Yuhara S."/>
            <person name="Nishiyama E."/>
            <person name="Endo R."/>
            <person name="Miyazaki R."/>
            <person name="Ono A."/>
            <person name="Yano K."/>
            <person name="Ito M."/>
            <person name="Sota M."/>
            <person name="Yuji N."/>
            <person name="Hattori M."/>
            <person name="Tsuda M."/>
        </authorList>
    </citation>
    <scope>NUCLEOTIDE SEQUENCE [LARGE SCALE GENOMIC DNA]</scope>
    <source>
        <strain>ATCC 17616 / 249</strain>
    </source>
</reference>
<feature type="chain" id="PRO_1000132095" description="Protein nucleotidyltransferase YdiU">
    <location>
        <begin position="1"/>
        <end position="522"/>
    </location>
</feature>
<feature type="active site" description="Proton acceptor" evidence="1">
    <location>
        <position position="271"/>
    </location>
</feature>
<feature type="binding site" evidence="1">
    <location>
        <position position="109"/>
    </location>
    <ligand>
        <name>ATP</name>
        <dbReference type="ChEBI" id="CHEBI:30616"/>
    </ligand>
</feature>
<feature type="binding site" evidence="1">
    <location>
        <position position="111"/>
    </location>
    <ligand>
        <name>ATP</name>
        <dbReference type="ChEBI" id="CHEBI:30616"/>
    </ligand>
</feature>
<feature type="binding site" evidence="1">
    <location>
        <position position="112"/>
    </location>
    <ligand>
        <name>ATP</name>
        <dbReference type="ChEBI" id="CHEBI:30616"/>
    </ligand>
</feature>
<feature type="binding site" evidence="1">
    <location>
        <position position="132"/>
    </location>
    <ligand>
        <name>ATP</name>
        <dbReference type="ChEBI" id="CHEBI:30616"/>
    </ligand>
</feature>
<feature type="binding site" evidence="1">
    <location>
        <position position="144"/>
    </location>
    <ligand>
        <name>ATP</name>
        <dbReference type="ChEBI" id="CHEBI:30616"/>
    </ligand>
</feature>
<feature type="binding site" evidence="1">
    <location>
        <position position="145"/>
    </location>
    <ligand>
        <name>ATP</name>
        <dbReference type="ChEBI" id="CHEBI:30616"/>
    </ligand>
</feature>
<feature type="binding site" evidence="1">
    <location>
        <position position="195"/>
    </location>
    <ligand>
        <name>ATP</name>
        <dbReference type="ChEBI" id="CHEBI:30616"/>
    </ligand>
</feature>
<feature type="binding site" evidence="1">
    <location>
        <position position="202"/>
    </location>
    <ligand>
        <name>ATP</name>
        <dbReference type="ChEBI" id="CHEBI:30616"/>
    </ligand>
</feature>
<feature type="binding site" evidence="1">
    <location>
        <position position="272"/>
    </location>
    <ligand>
        <name>Mg(2+)</name>
        <dbReference type="ChEBI" id="CHEBI:18420"/>
    </ligand>
</feature>
<feature type="binding site" evidence="1">
    <location>
        <position position="281"/>
    </location>
    <ligand>
        <name>ATP</name>
        <dbReference type="ChEBI" id="CHEBI:30616"/>
    </ligand>
</feature>
<feature type="binding site" evidence="1">
    <location>
        <position position="281"/>
    </location>
    <ligand>
        <name>Mg(2+)</name>
        <dbReference type="ChEBI" id="CHEBI:18420"/>
    </ligand>
</feature>
<accession>A9AJS7</accession>
<name>SELO_BURM1</name>
<protein>
    <recommendedName>
        <fullName evidence="1">Protein nucleotidyltransferase YdiU</fullName>
        <ecNumber evidence="1">2.7.7.-</ecNumber>
    </recommendedName>
    <alternativeName>
        <fullName evidence="1">Protein adenylyltransferase YdiU</fullName>
        <ecNumber evidence="1">2.7.7.108</ecNumber>
    </alternativeName>
    <alternativeName>
        <fullName evidence="1">Protein uridylyltransferase YdiU</fullName>
        <ecNumber evidence="1">2.7.7.-</ecNumber>
    </alternativeName>
</protein>
<keyword id="KW-0067">ATP-binding</keyword>
<keyword id="KW-0460">Magnesium</keyword>
<keyword id="KW-0464">Manganese</keyword>
<keyword id="KW-0479">Metal-binding</keyword>
<keyword id="KW-0547">Nucleotide-binding</keyword>
<keyword id="KW-0548">Nucleotidyltransferase</keyword>
<keyword id="KW-1185">Reference proteome</keyword>
<keyword id="KW-0808">Transferase</keyword>
<sequence>MSFSRSAADPADTLPDLAATLAAPDTHAFLRLGDAFHTRLPAAPLAAPYVVGFSDEVARLLGLPASLAAQPGFAELFAGNPTRDWPAEALPYASVYSGHQFGVWAGQLGDGRALTIGELPGTDGRRYELQLKGSGRTPYSRMGDGRAVLRSSIREFLCSEAMHHLGIPTTRALTVIGSDQPVVREEIETAAVVTRVSESFVRFGHFEHFFSNNRPDLLRALADHVIDRFYPACRDADDPYLALLEAATRRTAELVAQWQAVGFCHGVMNTDNMSILGVTIDYGPFGFVDAFDANHICNHSDTGGRYAYRMQPRIAHWNCYCLAQALLPLIGLQHGIADDDARAERAVDDAQAVLATFPERFGPALERAMRAKLGLALERDGDAALANQLLETMHASRADFTLTFRRLAQLSKHDASRDAPVRDLFIDREAFDAWANLYRARLSEETRDDAARAAAMNRVNPKYVLRNHLAELAIRRAKEKDFSEVERLAQVLRRPFDEQPEHESYAALPPDWAGSLEVSCSS</sequence>
<comment type="function">
    <text evidence="1">Nucleotidyltransferase involved in the post-translational modification of proteins. It can catalyze the addition of adenosine monophosphate (AMP) or uridine monophosphate (UMP) to a protein, resulting in modifications known as AMPylation and UMPylation.</text>
</comment>
<comment type="catalytic activity">
    <reaction evidence="1">
        <text>L-seryl-[protein] + ATP = 3-O-(5'-adenylyl)-L-seryl-[protein] + diphosphate</text>
        <dbReference type="Rhea" id="RHEA:58120"/>
        <dbReference type="Rhea" id="RHEA-COMP:9863"/>
        <dbReference type="Rhea" id="RHEA-COMP:15073"/>
        <dbReference type="ChEBI" id="CHEBI:29999"/>
        <dbReference type="ChEBI" id="CHEBI:30616"/>
        <dbReference type="ChEBI" id="CHEBI:33019"/>
        <dbReference type="ChEBI" id="CHEBI:142516"/>
        <dbReference type="EC" id="2.7.7.108"/>
    </reaction>
</comment>
<comment type="catalytic activity">
    <reaction evidence="1">
        <text>L-threonyl-[protein] + ATP = 3-O-(5'-adenylyl)-L-threonyl-[protein] + diphosphate</text>
        <dbReference type="Rhea" id="RHEA:54292"/>
        <dbReference type="Rhea" id="RHEA-COMP:11060"/>
        <dbReference type="Rhea" id="RHEA-COMP:13847"/>
        <dbReference type="ChEBI" id="CHEBI:30013"/>
        <dbReference type="ChEBI" id="CHEBI:30616"/>
        <dbReference type="ChEBI" id="CHEBI:33019"/>
        <dbReference type="ChEBI" id="CHEBI:138113"/>
        <dbReference type="EC" id="2.7.7.108"/>
    </reaction>
</comment>
<comment type="catalytic activity">
    <reaction evidence="1">
        <text>L-tyrosyl-[protein] + ATP = O-(5'-adenylyl)-L-tyrosyl-[protein] + diphosphate</text>
        <dbReference type="Rhea" id="RHEA:54288"/>
        <dbReference type="Rhea" id="RHEA-COMP:10136"/>
        <dbReference type="Rhea" id="RHEA-COMP:13846"/>
        <dbReference type="ChEBI" id="CHEBI:30616"/>
        <dbReference type="ChEBI" id="CHEBI:33019"/>
        <dbReference type="ChEBI" id="CHEBI:46858"/>
        <dbReference type="ChEBI" id="CHEBI:83624"/>
        <dbReference type="EC" id="2.7.7.108"/>
    </reaction>
</comment>
<comment type="catalytic activity">
    <reaction evidence="1">
        <text>L-histidyl-[protein] + UTP = N(tele)-(5'-uridylyl)-L-histidyl-[protein] + diphosphate</text>
        <dbReference type="Rhea" id="RHEA:83891"/>
        <dbReference type="Rhea" id="RHEA-COMP:9745"/>
        <dbReference type="Rhea" id="RHEA-COMP:20239"/>
        <dbReference type="ChEBI" id="CHEBI:29979"/>
        <dbReference type="ChEBI" id="CHEBI:33019"/>
        <dbReference type="ChEBI" id="CHEBI:46398"/>
        <dbReference type="ChEBI" id="CHEBI:233474"/>
    </reaction>
</comment>
<comment type="catalytic activity">
    <reaction evidence="1">
        <text>L-seryl-[protein] + UTP = O-(5'-uridylyl)-L-seryl-[protein] + diphosphate</text>
        <dbReference type="Rhea" id="RHEA:64604"/>
        <dbReference type="Rhea" id="RHEA-COMP:9863"/>
        <dbReference type="Rhea" id="RHEA-COMP:16635"/>
        <dbReference type="ChEBI" id="CHEBI:29999"/>
        <dbReference type="ChEBI" id="CHEBI:33019"/>
        <dbReference type="ChEBI" id="CHEBI:46398"/>
        <dbReference type="ChEBI" id="CHEBI:156051"/>
    </reaction>
</comment>
<comment type="catalytic activity">
    <reaction evidence="1">
        <text>L-tyrosyl-[protein] + UTP = O-(5'-uridylyl)-L-tyrosyl-[protein] + diphosphate</text>
        <dbReference type="Rhea" id="RHEA:83887"/>
        <dbReference type="Rhea" id="RHEA-COMP:10136"/>
        <dbReference type="Rhea" id="RHEA-COMP:20238"/>
        <dbReference type="ChEBI" id="CHEBI:33019"/>
        <dbReference type="ChEBI" id="CHEBI:46398"/>
        <dbReference type="ChEBI" id="CHEBI:46858"/>
        <dbReference type="ChEBI" id="CHEBI:90602"/>
    </reaction>
</comment>
<comment type="cofactor">
    <cofactor evidence="1">
        <name>Mg(2+)</name>
        <dbReference type="ChEBI" id="CHEBI:18420"/>
    </cofactor>
    <cofactor evidence="1">
        <name>Mn(2+)</name>
        <dbReference type="ChEBI" id="CHEBI:29035"/>
    </cofactor>
</comment>
<comment type="similarity">
    <text evidence="1">Belongs to the SELO family.</text>
</comment>
<gene>
    <name evidence="1" type="primary">ydiU</name>
    <name evidence="1" type="synonym">selO</name>
    <name type="ordered locus">Bmul_1366</name>
    <name type="ordered locus">BMULJ_01877</name>
</gene>
<dbReference type="EC" id="2.7.7.-" evidence="1"/>
<dbReference type="EC" id="2.7.7.108" evidence="1"/>
<dbReference type="EMBL" id="CP000868">
    <property type="protein sequence ID" value="ABX15054.1"/>
    <property type="molecule type" value="Genomic_DNA"/>
</dbReference>
<dbReference type="EMBL" id="AP009385">
    <property type="protein sequence ID" value="BAG43797.1"/>
    <property type="molecule type" value="Genomic_DNA"/>
</dbReference>
<dbReference type="RefSeq" id="WP_012213197.1">
    <property type="nucleotide sequence ID" value="NC_010084.1"/>
</dbReference>
<dbReference type="SMR" id="A9AJS7"/>
<dbReference type="STRING" id="395019.BMULJ_01877"/>
<dbReference type="KEGG" id="bmj:BMULJ_01877"/>
<dbReference type="KEGG" id="bmu:Bmul_1366"/>
<dbReference type="eggNOG" id="COG0397">
    <property type="taxonomic scope" value="Bacteria"/>
</dbReference>
<dbReference type="HOGENOM" id="CLU_010245_4_0_4"/>
<dbReference type="Proteomes" id="UP000008815">
    <property type="component" value="Chromosome 1"/>
</dbReference>
<dbReference type="GO" id="GO:0070733">
    <property type="term" value="F:AMPylase activity"/>
    <property type="evidence" value="ECO:0007669"/>
    <property type="project" value="RHEA"/>
</dbReference>
<dbReference type="GO" id="GO:0005524">
    <property type="term" value="F:ATP binding"/>
    <property type="evidence" value="ECO:0007669"/>
    <property type="project" value="UniProtKB-UniRule"/>
</dbReference>
<dbReference type="GO" id="GO:0000287">
    <property type="term" value="F:magnesium ion binding"/>
    <property type="evidence" value="ECO:0007669"/>
    <property type="project" value="UniProtKB-UniRule"/>
</dbReference>
<dbReference type="HAMAP" id="MF_00692">
    <property type="entry name" value="YdiU_SelO"/>
    <property type="match status" value="1"/>
</dbReference>
<dbReference type="InterPro" id="IPR003846">
    <property type="entry name" value="SelO"/>
</dbReference>
<dbReference type="NCBIfam" id="NF000658">
    <property type="entry name" value="PRK00029.1"/>
    <property type="match status" value="1"/>
</dbReference>
<dbReference type="PANTHER" id="PTHR32057">
    <property type="entry name" value="PROTEIN ADENYLYLTRANSFERASE SELO, MITOCHONDRIAL"/>
    <property type="match status" value="1"/>
</dbReference>
<dbReference type="PANTHER" id="PTHR32057:SF14">
    <property type="entry name" value="PROTEIN ADENYLYLTRANSFERASE SELO, MITOCHONDRIAL"/>
    <property type="match status" value="1"/>
</dbReference>
<dbReference type="Pfam" id="PF02696">
    <property type="entry name" value="SelO"/>
    <property type="match status" value="1"/>
</dbReference>